<name>ARF6_RAT</name>
<organism>
    <name type="scientific">Rattus norvegicus</name>
    <name type="common">Rat</name>
    <dbReference type="NCBI Taxonomy" id="10116"/>
    <lineage>
        <taxon>Eukaryota</taxon>
        <taxon>Metazoa</taxon>
        <taxon>Chordata</taxon>
        <taxon>Craniata</taxon>
        <taxon>Vertebrata</taxon>
        <taxon>Euteleostomi</taxon>
        <taxon>Mammalia</taxon>
        <taxon>Eutheria</taxon>
        <taxon>Euarchontoglires</taxon>
        <taxon>Glires</taxon>
        <taxon>Rodentia</taxon>
        <taxon>Myomorpha</taxon>
        <taxon>Muroidea</taxon>
        <taxon>Muridae</taxon>
        <taxon>Murinae</taxon>
        <taxon>Rattus</taxon>
    </lineage>
</organism>
<dbReference type="EC" id="3.6.5.2" evidence="1"/>
<dbReference type="EMBL" id="L12385">
    <property type="protein sequence ID" value="AAA40690.1"/>
    <property type="molecule type" value="mRNA"/>
</dbReference>
<dbReference type="EMBL" id="BC091146">
    <property type="protein sequence ID" value="AAH91146.1"/>
    <property type="molecule type" value="mRNA"/>
</dbReference>
<dbReference type="RefSeq" id="NP_077066.1">
    <property type="nucleotide sequence ID" value="NM_024152.2"/>
</dbReference>
<dbReference type="SMR" id="P62332"/>
<dbReference type="BioGRID" id="249405">
    <property type="interactions" value="5"/>
</dbReference>
<dbReference type="FunCoup" id="P62332">
    <property type="interactions" value="3687"/>
</dbReference>
<dbReference type="IntAct" id="P62332">
    <property type="interactions" value="2"/>
</dbReference>
<dbReference type="STRING" id="10116.ENSRNOP00000006355"/>
<dbReference type="iPTMnet" id="P62332"/>
<dbReference type="PhosphoSitePlus" id="P62332"/>
<dbReference type="jPOST" id="P62332"/>
<dbReference type="PaxDb" id="10116-ENSRNOP00000006355"/>
<dbReference type="Ensembl" id="ENSRNOT00000097511.1">
    <property type="protein sequence ID" value="ENSRNOP00000079011.1"/>
    <property type="gene ID" value="ENSRNOG00000070951.1"/>
</dbReference>
<dbReference type="Ensembl" id="ENSRNOT00000101767.1">
    <property type="protein sequence ID" value="ENSRNOP00000077772.1"/>
    <property type="gene ID" value="ENSRNOG00000070951.1"/>
</dbReference>
<dbReference type="Ensembl" id="ENSRNOT00000115929.1">
    <property type="protein sequence ID" value="ENSRNOP00000080368.1"/>
    <property type="gene ID" value="ENSRNOG00000070951.1"/>
</dbReference>
<dbReference type="GeneID" id="79121"/>
<dbReference type="KEGG" id="rno:79121"/>
<dbReference type="UCSC" id="RGD:621279">
    <property type="organism name" value="rat"/>
</dbReference>
<dbReference type="AGR" id="RGD:621279"/>
<dbReference type="CTD" id="382"/>
<dbReference type="RGD" id="621279">
    <property type="gene designation" value="Arf6"/>
</dbReference>
<dbReference type="eggNOG" id="KOG0071">
    <property type="taxonomic scope" value="Eukaryota"/>
</dbReference>
<dbReference type="GeneTree" id="ENSGT00940000156593"/>
<dbReference type="HOGENOM" id="CLU_040729_9_4_1"/>
<dbReference type="InParanoid" id="P62332"/>
<dbReference type="OMA" id="GGQISKM"/>
<dbReference type="OrthoDB" id="2011769at2759"/>
<dbReference type="PhylomeDB" id="P62332"/>
<dbReference type="TreeFam" id="TF300808"/>
<dbReference type="Reactome" id="R-RNO-8854214">
    <property type="pathway name" value="TBC/RABGAPs"/>
</dbReference>
<dbReference type="Reactome" id="R-RNO-8856828">
    <property type="pathway name" value="Clathrin-mediated endocytosis"/>
</dbReference>
<dbReference type="Reactome" id="R-RNO-8875656">
    <property type="pathway name" value="MET receptor recycling"/>
</dbReference>
<dbReference type="PRO" id="PR:P62332"/>
<dbReference type="Proteomes" id="UP000002494">
    <property type="component" value="Chromosome 6"/>
</dbReference>
<dbReference type="Bgee" id="ENSRNOG00000004791">
    <property type="expression patterns" value="Expressed in esophagus and 20 other cell types or tissues"/>
</dbReference>
<dbReference type="GO" id="GO:0005938">
    <property type="term" value="C:cell cortex"/>
    <property type="evidence" value="ECO:0000266"/>
    <property type="project" value="RGD"/>
</dbReference>
<dbReference type="GO" id="GO:0032154">
    <property type="term" value="C:cleavage furrow"/>
    <property type="evidence" value="ECO:0000250"/>
    <property type="project" value="UniProtKB"/>
</dbReference>
<dbReference type="GO" id="GO:0005737">
    <property type="term" value="C:cytoplasm"/>
    <property type="evidence" value="ECO:0000266"/>
    <property type="project" value="RGD"/>
</dbReference>
<dbReference type="GO" id="GO:0005829">
    <property type="term" value="C:cytosol"/>
    <property type="evidence" value="ECO:0000250"/>
    <property type="project" value="UniProtKB"/>
</dbReference>
<dbReference type="GO" id="GO:0005769">
    <property type="term" value="C:early endosome"/>
    <property type="evidence" value="ECO:0000314"/>
    <property type="project" value="RGD"/>
</dbReference>
<dbReference type="GO" id="GO:0031901">
    <property type="term" value="C:early endosome membrane"/>
    <property type="evidence" value="ECO:0007669"/>
    <property type="project" value="UniProtKB-SubCell"/>
</dbReference>
<dbReference type="GO" id="GO:0030139">
    <property type="term" value="C:endocytic vesicle"/>
    <property type="evidence" value="ECO:0000250"/>
    <property type="project" value="UniProtKB"/>
</dbReference>
<dbReference type="GO" id="GO:0005768">
    <property type="term" value="C:endosome"/>
    <property type="evidence" value="ECO:0000266"/>
    <property type="project" value="RGD"/>
</dbReference>
<dbReference type="GO" id="GO:0070382">
    <property type="term" value="C:exocytic vesicle"/>
    <property type="evidence" value="ECO:0000266"/>
    <property type="project" value="RGD"/>
</dbReference>
<dbReference type="GO" id="GO:0031527">
    <property type="term" value="C:filopodium membrane"/>
    <property type="evidence" value="ECO:0000266"/>
    <property type="project" value="RGD"/>
</dbReference>
<dbReference type="GO" id="GO:0090543">
    <property type="term" value="C:Flemming body"/>
    <property type="evidence" value="ECO:0000250"/>
    <property type="project" value="UniProtKB"/>
</dbReference>
<dbReference type="GO" id="GO:0098978">
    <property type="term" value="C:glutamatergic synapse"/>
    <property type="evidence" value="ECO:0000314"/>
    <property type="project" value="SynGO"/>
</dbReference>
<dbReference type="GO" id="GO:0005794">
    <property type="term" value="C:Golgi apparatus"/>
    <property type="evidence" value="ECO:0000266"/>
    <property type="project" value="RGD"/>
</dbReference>
<dbReference type="GO" id="GO:0016020">
    <property type="term" value="C:membrane"/>
    <property type="evidence" value="ECO:0000266"/>
    <property type="project" value="RGD"/>
</dbReference>
<dbReference type="GO" id="GO:0030496">
    <property type="term" value="C:midbody"/>
    <property type="evidence" value="ECO:0000266"/>
    <property type="project" value="RGD"/>
</dbReference>
<dbReference type="GO" id="GO:0005886">
    <property type="term" value="C:plasma membrane"/>
    <property type="evidence" value="ECO:0000266"/>
    <property type="project" value="RGD"/>
</dbReference>
<dbReference type="GO" id="GO:0098794">
    <property type="term" value="C:postsynapse"/>
    <property type="evidence" value="ECO:0000314"/>
    <property type="project" value="SynGO"/>
</dbReference>
<dbReference type="GO" id="GO:0098793">
    <property type="term" value="C:presynapse"/>
    <property type="evidence" value="ECO:0000314"/>
    <property type="project" value="SynGO"/>
</dbReference>
<dbReference type="GO" id="GO:0055037">
    <property type="term" value="C:recycling endosome"/>
    <property type="evidence" value="ECO:0000314"/>
    <property type="project" value="UniProtKB"/>
</dbReference>
<dbReference type="GO" id="GO:0055038">
    <property type="term" value="C:recycling endosome membrane"/>
    <property type="evidence" value="ECO:0000250"/>
    <property type="project" value="UniProtKB"/>
</dbReference>
<dbReference type="GO" id="GO:0001726">
    <property type="term" value="C:ruffle"/>
    <property type="evidence" value="ECO:0000314"/>
    <property type="project" value="RGD"/>
</dbReference>
<dbReference type="GO" id="GO:0003925">
    <property type="term" value="F:G protein activity"/>
    <property type="evidence" value="ECO:0000250"/>
    <property type="project" value="UniProtKB"/>
</dbReference>
<dbReference type="GO" id="GO:0019003">
    <property type="term" value="F:GDP binding"/>
    <property type="evidence" value="ECO:0000250"/>
    <property type="project" value="UniProtKB"/>
</dbReference>
<dbReference type="GO" id="GO:0005525">
    <property type="term" value="F:GTP binding"/>
    <property type="evidence" value="ECO:0000250"/>
    <property type="project" value="UniProtKB"/>
</dbReference>
<dbReference type="GO" id="GO:0035591">
    <property type="term" value="F:signaling adaptor activity"/>
    <property type="evidence" value="ECO:0000266"/>
    <property type="project" value="RGD"/>
</dbReference>
<dbReference type="GO" id="GO:0031996">
    <property type="term" value="F:thioesterase binding"/>
    <property type="evidence" value="ECO:0000266"/>
    <property type="project" value="RGD"/>
</dbReference>
<dbReference type="GO" id="GO:0030036">
    <property type="term" value="P:actin cytoskeleton organization"/>
    <property type="evidence" value="ECO:0000304"/>
    <property type="project" value="RGD"/>
</dbReference>
<dbReference type="GO" id="GO:0030154">
    <property type="term" value="P:cell differentiation"/>
    <property type="evidence" value="ECO:0007669"/>
    <property type="project" value="UniProtKB-KW"/>
</dbReference>
<dbReference type="GO" id="GO:1990090">
    <property type="term" value="P:cellular response to nerve growth factor stimulus"/>
    <property type="evidence" value="ECO:0000314"/>
    <property type="project" value="UniProtKB"/>
</dbReference>
<dbReference type="GO" id="GO:0030866">
    <property type="term" value="P:cortical actin cytoskeleton organization"/>
    <property type="evidence" value="ECO:0000266"/>
    <property type="project" value="RGD"/>
</dbReference>
<dbReference type="GO" id="GO:0032456">
    <property type="term" value="P:endocytic recycling"/>
    <property type="evidence" value="ECO:0000314"/>
    <property type="project" value="UniProtKB"/>
</dbReference>
<dbReference type="GO" id="GO:1902217">
    <property type="term" value="P:erythrocyte apoptotic process"/>
    <property type="evidence" value="ECO:0000266"/>
    <property type="project" value="RGD"/>
</dbReference>
<dbReference type="GO" id="GO:0090162">
    <property type="term" value="P:establishment of epithelial cell polarity"/>
    <property type="evidence" value="ECO:0000266"/>
    <property type="project" value="RGD"/>
</dbReference>
<dbReference type="GO" id="GO:0097284">
    <property type="term" value="P:hepatocyte apoptotic process"/>
    <property type="evidence" value="ECO:0000266"/>
    <property type="project" value="RGD"/>
</dbReference>
<dbReference type="GO" id="GO:0006886">
    <property type="term" value="P:intracellular protein transport"/>
    <property type="evidence" value="ECO:0000318"/>
    <property type="project" value="GO_Central"/>
</dbReference>
<dbReference type="GO" id="GO:0001889">
    <property type="term" value="P:liver development"/>
    <property type="evidence" value="ECO:0000266"/>
    <property type="project" value="RGD"/>
</dbReference>
<dbReference type="GO" id="GO:0099562">
    <property type="term" value="P:maintenance of postsynaptic density structure"/>
    <property type="evidence" value="ECO:0000314"/>
    <property type="project" value="SynGO"/>
</dbReference>
<dbReference type="GO" id="GO:2000171">
    <property type="term" value="P:negative regulation of dendrite development"/>
    <property type="evidence" value="ECO:0000315"/>
    <property type="project" value="RGD"/>
</dbReference>
<dbReference type="GO" id="GO:2000009">
    <property type="term" value="P:negative regulation of protein localization to cell surface"/>
    <property type="evidence" value="ECO:0000266"/>
    <property type="project" value="RGD"/>
</dbReference>
<dbReference type="GO" id="GO:0007399">
    <property type="term" value="P:nervous system development"/>
    <property type="evidence" value="ECO:0007669"/>
    <property type="project" value="UniProtKB-KW"/>
</dbReference>
<dbReference type="GO" id="GO:0030838">
    <property type="term" value="P:positive regulation of actin filament polymerization"/>
    <property type="evidence" value="ECO:0000266"/>
    <property type="project" value="RGD"/>
</dbReference>
<dbReference type="GO" id="GO:0120183">
    <property type="term" value="P:positive regulation of focal adhesion disassembly"/>
    <property type="evidence" value="ECO:0000266"/>
    <property type="project" value="RGD"/>
</dbReference>
<dbReference type="GO" id="GO:0051549">
    <property type="term" value="P:positive regulation of keratinocyte migration"/>
    <property type="evidence" value="ECO:0000266"/>
    <property type="project" value="RGD"/>
</dbReference>
<dbReference type="GO" id="GO:1903438">
    <property type="term" value="P:positive regulation of mitotic cytokinetic process"/>
    <property type="evidence" value="ECO:0000266"/>
    <property type="project" value="RGD"/>
</dbReference>
<dbReference type="GO" id="GO:0010976">
    <property type="term" value="P:positive regulation of neuron projection development"/>
    <property type="evidence" value="ECO:0000266"/>
    <property type="project" value="RGD"/>
</dbReference>
<dbReference type="GO" id="GO:1903078">
    <property type="term" value="P:positive regulation of protein localization to plasma membrane"/>
    <property type="evidence" value="ECO:0000266"/>
    <property type="project" value="RGD"/>
</dbReference>
<dbReference type="GO" id="GO:0050714">
    <property type="term" value="P:positive regulation of protein secretion"/>
    <property type="evidence" value="ECO:0000266"/>
    <property type="project" value="RGD"/>
</dbReference>
<dbReference type="GO" id="GO:0034394">
    <property type="term" value="P:protein localization to cell surface"/>
    <property type="evidence" value="ECO:0000266"/>
    <property type="project" value="RGD"/>
</dbReference>
<dbReference type="GO" id="GO:1905345">
    <property type="term" value="P:protein localization to cleavage furrow"/>
    <property type="evidence" value="ECO:0000266"/>
    <property type="project" value="RGD"/>
</dbReference>
<dbReference type="GO" id="GO:0036010">
    <property type="term" value="P:protein localization to endosome"/>
    <property type="evidence" value="ECO:0000250"/>
    <property type="project" value="UniProtKB"/>
</dbReference>
<dbReference type="GO" id="GO:0072659">
    <property type="term" value="P:protein localization to plasma membrane"/>
    <property type="evidence" value="ECO:0000266"/>
    <property type="project" value="RGD"/>
</dbReference>
<dbReference type="GO" id="GO:0060998">
    <property type="term" value="P:regulation of dendritic spine development"/>
    <property type="evidence" value="ECO:0000315"/>
    <property type="project" value="UniProtKB"/>
</dbReference>
<dbReference type="GO" id="GO:0051489">
    <property type="term" value="P:regulation of filopodium assembly"/>
    <property type="evidence" value="ECO:0000266"/>
    <property type="project" value="RGD"/>
</dbReference>
<dbReference type="GO" id="GO:0010975">
    <property type="term" value="P:regulation of neuron projection development"/>
    <property type="evidence" value="ECO:0000266"/>
    <property type="project" value="RGD"/>
</dbReference>
<dbReference type="GO" id="GO:1905606">
    <property type="term" value="P:regulation of presynapse assembly"/>
    <property type="evidence" value="ECO:0000314"/>
    <property type="project" value="SynGO"/>
</dbReference>
<dbReference type="GO" id="GO:0035020">
    <property type="term" value="P:regulation of Rac protein signal transduction"/>
    <property type="evidence" value="ECO:0000266"/>
    <property type="project" value="RGD"/>
</dbReference>
<dbReference type="GO" id="GO:0097178">
    <property type="term" value="P:ruffle assembly"/>
    <property type="evidence" value="ECO:0000266"/>
    <property type="project" value="RGD"/>
</dbReference>
<dbReference type="GO" id="GO:0048488">
    <property type="term" value="P:synaptic vesicle endocytosis"/>
    <property type="evidence" value="ECO:0000314"/>
    <property type="project" value="SynGO"/>
</dbReference>
<dbReference type="GO" id="GO:0016192">
    <property type="term" value="P:vesicle-mediated transport"/>
    <property type="evidence" value="ECO:0000318"/>
    <property type="project" value="GO_Central"/>
</dbReference>
<dbReference type="CDD" id="cd04149">
    <property type="entry name" value="Arf6"/>
    <property type="match status" value="1"/>
</dbReference>
<dbReference type="FunFam" id="3.40.50.300:FF:000286">
    <property type="entry name" value="ADP-ribosylation factor 6"/>
    <property type="match status" value="1"/>
</dbReference>
<dbReference type="Gene3D" id="3.40.50.300">
    <property type="entry name" value="P-loop containing nucleotide triphosphate hydrolases"/>
    <property type="match status" value="1"/>
</dbReference>
<dbReference type="InterPro" id="IPR041838">
    <property type="entry name" value="Arf6"/>
</dbReference>
<dbReference type="InterPro" id="IPR027417">
    <property type="entry name" value="P-loop_NTPase"/>
</dbReference>
<dbReference type="InterPro" id="IPR005225">
    <property type="entry name" value="Small_GTP-bd"/>
</dbReference>
<dbReference type="InterPro" id="IPR024156">
    <property type="entry name" value="Small_GTPase_ARF"/>
</dbReference>
<dbReference type="InterPro" id="IPR006689">
    <property type="entry name" value="Small_GTPase_ARF/SAR"/>
</dbReference>
<dbReference type="NCBIfam" id="TIGR00231">
    <property type="entry name" value="small_GTP"/>
    <property type="match status" value="1"/>
</dbReference>
<dbReference type="PANTHER" id="PTHR11711">
    <property type="entry name" value="ADP RIBOSYLATION FACTOR-RELATED"/>
    <property type="match status" value="1"/>
</dbReference>
<dbReference type="Pfam" id="PF00025">
    <property type="entry name" value="Arf"/>
    <property type="match status" value="1"/>
</dbReference>
<dbReference type="PRINTS" id="PR00328">
    <property type="entry name" value="SAR1GTPBP"/>
</dbReference>
<dbReference type="SMART" id="SM00177">
    <property type="entry name" value="ARF"/>
    <property type="match status" value="1"/>
</dbReference>
<dbReference type="SMART" id="SM00175">
    <property type="entry name" value="RAB"/>
    <property type="match status" value="1"/>
</dbReference>
<dbReference type="SMART" id="SM00178">
    <property type="entry name" value="SAR"/>
    <property type="match status" value="1"/>
</dbReference>
<dbReference type="SUPFAM" id="SSF52540">
    <property type="entry name" value="P-loop containing nucleoside triphosphate hydrolases"/>
    <property type="match status" value="1"/>
</dbReference>
<dbReference type="PROSITE" id="PS51417">
    <property type="entry name" value="ARF"/>
    <property type="match status" value="1"/>
</dbReference>
<gene>
    <name type="primary">Arf6</name>
</gene>
<comment type="function">
    <text evidence="2 4 5">GTP-binding protein involved in protein trafficking that regulates endocytic recycling and cytoskeleton remodeling (PubMed:26446845). Required for normal completion of mitotic cytokinesis. Involved in the regulation of dendritic spine development, contributing to the regulation of dendritic branching and filopodia extension (PubMed:16672654). Plays an important role in membrane trafficking, during junctional remodeling and epithelial polarization. Regulates surface levels of adherens junction proteins such as CDH1. Required for NTRK1 sorting to the recycling pathway from early endosomes (PubMed:26446845).</text>
</comment>
<comment type="catalytic activity">
    <reaction evidence="1">
        <text>GTP + H2O = GDP + phosphate + H(+)</text>
        <dbReference type="Rhea" id="RHEA:19669"/>
        <dbReference type="ChEBI" id="CHEBI:15377"/>
        <dbReference type="ChEBI" id="CHEBI:15378"/>
        <dbReference type="ChEBI" id="CHEBI:37565"/>
        <dbReference type="ChEBI" id="CHEBI:43474"/>
        <dbReference type="ChEBI" id="CHEBI:58189"/>
        <dbReference type="EC" id="3.6.5.2"/>
    </reaction>
    <physiologicalReaction direction="left-to-right" evidence="1">
        <dbReference type="Rhea" id="RHEA:19670"/>
    </physiologicalReaction>
</comment>
<comment type="activity regulation">
    <text evidence="1 5">Activation is generally mediated by guanine exchange factor (GEF), while inactivation through hydrolysis of bound GTP is catalyzed by GTPases activating protein (GAP). Inactivated by ACAP1 and ACAP2 (By similarity). Activated by NGF via NTRK1 (PubMed:26446845).</text>
</comment>
<comment type="subunit">
    <text evidence="1 2 3">Interacts (when activated) with GGA1, GGA2 and GGA3; the interaction is required for proper subcellular location of GGA1, GGA2 and GGA3 (By similarity). Interacts with PIP5K1C. Interacts with USP6 (via Rab-GAP TBC domain). Interacts with RAB11FIP3 and RAB11FIP4. Interacts with HERC1. Interacts with ARHGAP21. Interacts with ASAP3; the interaction is stabilized by calcium ions. Interacts with NCS1/FREQ at the plasma membrane. Interacts with TBC1D24. Interacts with ECPAS. Interacts with MICALL1. Interacts with SPAG9 homodimers, forming heterotetramers. Interacts with CYTH3 (By similarity). Interacts with ASAP2 (PubMed:10022920). Interacts with UACA (By similarity). Interacts with KIF23, forming heterodimers and heterotetramers (By similarity). Interacts with C9orf72 (By similarity). Interacts (GTP-bound form) with TJAP1/PILT (By similarity).</text>
</comment>
<comment type="subcellular location">
    <subcellularLocation>
        <location evidence="1">Cytoplasm</location>
        <location evidence="1">Cytosol</location>
    </subcellularLocation>
    <subcellularLocation>
        <location evidence="1">Cell membrane</location>
        <topology evidence="1">Lipid-anchor</topology>
    </subcellularLocation>
    <subcellularLocation>
        <location evidence="1">Endosome membrane</location>
        <topology evidence="1">Lipid-anchor</topology>
    </subcellularLocation>
    <subcellularLocation>
        <location evidence="5">Recycling endosome membrane</location>
        <topology evidence="1">Lipid-anchor</topology>
    </subcellularLocation>
    <subcellularLocation>
        <location evidence="1">Cell projection</location>
        <location evidence="1">Filopodium membrane</location>
        <topology evidence="1">Lipid-anchor</topology>
    </subcellularLocation>
    <subcellularLocation>
        <location evidence="1">Cell projection</location>
        <location evidence="1">Ruffle</location>
    </subcellularLocation>
    <subcellularLocation>
        <location evidence="1">Cleavage furrow</location>
    </subcellularLocation>
    <subcellularLocation>
        <location evidence="1">Midbody</location>
        <location evidence="1">Midbody ring</location>
    </subcellularLocation>
    <subcellularLocation>
        <location evidence="2">Early endosome membrane</location>
        <topology evidence="2">Lipid-anchor</topology>
    </subcellularLocation>
    <subcellularLocation>
        <location evidence="2">Golgi apparatus</location>
        <location evidence="2">trans-Golgi network membrane</location>
        <topology evidence="2">Lipid-anchor</topology>
    </subcellularLocation>
    <text evidence="1 2">Distributed uniformly on the plasma membrane, as well as throughout the cytoplasm during metaphase. Subsequently concentrated at patches in the equatorial region at the onset of cytokinesis, and becomes distributed in the equatorial region concurrent with cleavage furrow ingression. In late stages of cytokinesis, concentrates at the midbody ring/Flemming body (By similarity). Recruitment to the midbody ring requires both activation by PSD/EFA6A and interaction with KIF23/MKLP1 (By similarity). After abscission of the intercellular bridge, incorporated into one of the daughter cells as a midbody remnant and localizes to punctate structures beneath the plasma membrane (By similarity). Recruited to the cell membrane in association with CYTH2 and ARL4C. Colocalizes with DAB2IP at the plasma membrane and endocytic vesicles (By similarity). Myristoylation is required for proper localization to membranes: myristoylation on Lys-3 allows ARF6 to remain on membranes during the GTPase cycle (By similarity).</text>
</comment>
<comment type="PTM">
    <text evidence="1">GTP-bound form is myristoylated on Lys-3 by NMT1 and NMT2, allowing ARF6 to remain on membranes during the GTPase cycle, thereby promoting its activity. GDP-bound inactive form is demyristoylated on Lys-3 by SIRT2 at early endosomes or endocytic recycling compartment to allow its efficient activation by a guanine exchange factor (GEF) after GDP release.</text>
</comment>
<comment type="similarity">
    <text evidence="6">Belongs to the small GTPase superfamily. Arf family.</text>
</comment>
<sequence length="175" mass="20082">MGKVLSKIFGNKEMRILMLGLDAAGKTTILYKLKLGQSVTTIPTVGFNVETVTYKNVKFNVWDVGGQDKIRPLWRHYYTGTQGLIFVVDCADRDRIDEARQELHRIINDREMRDAIILIFANKQDLPDAMKPHEIQEKLGLTRIRDRNWYVQPSCATSGDGLYEGLTWLTSNYKS</sequence>
<accession>P62332</accession>
<accession>P26438</accession>
<accession>Q5BKA5</accession>
<protein>
    <recommendedName>
        <fullName>ADP-ribosylation factor 6</fullName>
        <ecNumber evidence="1">3.6.5.2</ecNumber>
    </recommendedName>
</protein>
<reference key="1">
    <citation type="journal article" date="1996" name="Mol. Cell. Biochem.">
        <title>Interspecies relationships among ADP-ribosylation factors (ARFs): evidence of evolutionary pressure to maintain individual identities.</title>
        <authorList>
            <person name="Price S.R."/>
            <person name="Nightingale M.S."/>
            <person name="Tsuchiya M."/>
            <person name="Moss J."/>
            <person name="Vaughan M."/>
        </authorList>
    </citation>
    <scope>NUCLEOTIDE SEQUENCE [MRNA]</scope>
    <source>
        <tissue>Brain</tissue>
    </source>
</reference>
<reference key="2">
    <citation type="journal article" date="2004" name="Genome Res.">
        <title>The status, quality, and expansion of the NIH full-length cDNA project: the Mammalian Gene Collection (MGC).</title>
        <authorList>
            <consortium name="The MGC Project Team"/>
        </authorList>
    </citation>
    <scope>NUCLEOTIDE SEQUENCE [LARGE SCALE MRNA]</scope>
    <source>
        <tissue>Ovary</tissue>
    </source>
</reference>
<reference key="3">
    <citation type="journal article" date="1999" name="Mol. Cell. Biol.">
        <title>Identification of a new Pyk2 target protein with Arf-GAP activity.</title>
        <authorList>
            <person name="Andreev J."/>
            <person name="Simon J.-P."/>
            <person name="Sabatini D.D."/>
            <person name="Kam J."/>
            <person name="Plowman G."/>
            <person name="Randazzo P.A."/>
            <person name="Schlessinger J."/>
        </authorList>
    </citation>
    <scope>INTERACTION WITH ASAP2</scope>
</reference>
<reference key="4">
    <citation type="journal article" date="2006" name="J. Neurosci.">
        <title>ARF6 and EFA6A regulate the development and maintenance of dendritic spines.</title>
        <authorList>
            <person name="Choi S."/>
            <person name="Ko J."/>
            <person name="Lee J.R."/>
            <person name="Lee H.W."/>
            <person name="Kim K."/>
            <person name="Chung H.S."/>
            <person name="Kim H."/>
            <person name="Kim E."/>
        </authorList>
    </citation>
    <scope>FUNCTION AS REGULATOR OF DENDRITIC SPINE DEVELOPMENT</scope>
</reference>
<reference key="5">
    <citation type="journal article" date="2015" name="Mol. Biol. Cell">
        <title>GGA3 mediates TrkA endocytic recycling to promote sustained Akt phosphorylation and cell survival.</title>
        <authorList>
            <person name="Li X."/>
            <person name="Lavigne P."/>
            <person name="Lavoie C."/>
        </authorList>
    </citation>
    <scope>INTERACTION WITH GGA3</scope>
    <scope>ACTIVITY REGULATION</scope>
    <scope>FUNCTION</scope>
    <scope>SUBCELLULAR LOCATION</scope>
</reference>
<feature type="initiator methionine" description="Removed" evidence="1">
    <location>
        <position position="1"/>
    </location>
</feature>
<feature type="chain" id="PRO_0000207402" description="ADP-ribosylation factor 6">
    <location>
        <begin position="2"/>
        <end position="175"/>
    </location>
</feature>
<feature type="binding site" evidence="1">
    <location>
        <begin position="23"/>
        <end position="28"/>
    </location>
    <ligand>
        <name>GTP</name>
        <dbReference type="ChEBI" id="CHEBI:37565"/>
    </ligand>
</feature>
<feature type="binding site" evidence="1">
    <location>
        <begin position="41"/>
        <end position="44"/>
    </location>
    <ligand>
        <name>GTP</name>
        <dbReference type="ChEBI" id="CHEBI:37565"/>
    </ligand>
</feature>
<feature type="binding site" evidence="1">
    <location>
        <begin position="63"/>
        <end position="67"/>
    </location>
    <ligand>
        <name>GTP</name>
        <dbReference type="ChEBI" id="CHEBI:37565"/>
    </ligand>
</feature>
<feature type="binding site" evidence="1">
    <location>
        <begin position="122"/>
        <end position="125"/>
    </location>
    <ligand>
        <name>GTP</name>
        <dbReference type="ChEBI" id="CHEBI:37565"/>
    </ligand>
</feature>
<feature type="binding site" evidence="1">
    <location>
        <begin position="155"/>
        <end position="156"/>
    </location>
    <ligand>
        <name>GTP</name>
        <dbReference type="ChEBI" id="CHEBI:37565"/>
    </ligand>
</feature>
<feature type="lipid moiety-binding region" description="N-myristoyl glycine" evidence="1">
    <location>
        <position position="2"/>
    </location>
</feature>
<feature type="lipid moiety-binding region" description="N6-myristoyl lysine" evidence="1">
    <location>
        <position position="3"/>
    </location>
</feature>
<keyword id="KW-1003">Cell membrane</keyword>
<keyword id="KW-0966">Cell projection</keyword>
<keyword id="KW-0963">Cytoplasm</keyword>
<keyword id="KW-0221">Differentiation</keyword>
<keyword id="KW-0967">Endosome</keyword>
<keyword id="KW-0333">Golgi apparatus</keyword>
<keyword id="KW-0342">GTP-binding</keyword>
<keyword id="KW-0378">Hydrolase</keyword>
<keyword id="KW-0449">Lipoprotein</keyword>
<keyword id="KW-0472">Membrane</keyword>
<keyword id="KW-0519">Myristate</keyword>
<keyword id="KW-0524">Neurogenesis</keyword>
<keyword id="KW-0547">Nucleotide-binding</keyword>
<keyword id="KW-0653">Protein transport</keyword>
<keyword id="KW-1185">Reference proteome</keyword>
<keyword id="KW-0813">Transport</keyword>
<evidence type="ECO:0000250" key="1">
    <source>
        <dbReference type="UniProtKB" id="P62330"/>
    </source>
</evidence>
<evidence type="ECO:0000250" key="2">
    <source>
        <dbReference type="UniProtKB" id="P62331"/>
    </source>
</evidence>
<evidence type="ECO:0000269" key="3">
    <source>
    </source>
</evidence>
<evidence type="ECO:0000269" key="4">
    <source>
    </source>
</evidence>
<evidence type="ECO:0000269" key="5">
    <source>
    </source>
</evidence>
<evidence type="ECO:0000305" key="6"/>
<proteinExistence type="evidence at protein level"/>